<comment type="function">
    <text evidence="1">Mediates the nuclear export of proteins (cargos) with broad substrate specificity. In the nucleus binds cooperatively to its cargo and to the GTPase Ran in its active GTP-bound form. Docking of this trimeric complex to the nuclear pore complex (NPC) is mediated through binding to nucleoporins. Upon transit of a nuclear export complex into the cytoplasm, disassembling of the complex and hydrolysis of Ran-GTP to Ran-GDP (induced by RANBP1 and RANGAP1, respectively) cause release of the cargo from the export receptor. XPO7 then return to the nuclear compartment and mediate another round of transport. The directionality of nuclear export is thought to be conferred by an asymmetric distribution of the GTP- and GDP-bound forms of Ran between the cytoplasm and nucleus (By similarity).</text>
</comment>
<comment type="subunit">
    <text evidence="1">Binds to nucleoporins. Found in a complex with XPO7, EIF4A1, ARHGAP1, VPS26A, VPS29, VPS35 and SFN. Interacts with ARHGAP1 and SFN. Interacts with Ran and cargo proteins in a GTP-dependent manner (By similarity).</text>
</comment>
<comment type="subcellular location">
    <subcellularLocation>
        <location evidence="2">Cytoplasm</location>
    </subcellularLocation>
    <subcellularLocation>
        <location evidence="2">Nucleus</location>
    </subcellularLocation>
    <text evidence="2">Shuttles between the nucleus and the cytoplasm.</text>
</comment>
<comment type="alternative products">
    <event type="alternative splicing"/>
    <isoform>
        <id>Q9EPK7-1</id>
        <name>1</name>
        <sequence type="displayed"/>
    </isoform>
    <isoform>
        <id>Q9EPK7-2</id>
        <name>2</name>
        <sequence type="described" ref="VSP_018600"/>
    </isoform>
</comment>
<comment type="tissue specificity">
    <text evidence="4">Highly expressed in testis and spleen, moderate in kidney and liver and low in heart, brain, lung and skeletal muscle.</text>
</comment>
<comment type="similarity">
    <text evidence="6">Belongs to the exportin family.</text>
</comment>
<reference key="1">
    <citation type="journal article" date="2000" name="Biochem. Biophys. Res. Commun.">
        <title>Identification of a novel putative Ran-binding protein and its close homologue.</title>
        <authorList>
            <person name="Koch P."/>
            <person name="Bohlmann I."/>
            <person name="Schaefer M."/>
            <person name="Hansen-Hagge T.E."/>
            <person name="Kiyoi H."/>
            <person name="Wilda M."/>
            <person name="Hameister H."/>
            <person name="Bartram C.R."/>
            <person name="Janssen J.W.G."/>
        </authorList>
    </citation>
    <scope>NUCLEOTIDE SEQUENCE [MRNA] (ISOFORM 1)</scope>
    <scope>TISSUE SPECIFICITY</scope>
    <source>
        <tissue>Testis</tissue>
    </source>
</reference>
<reference key="2">
    <citation type="journal article" date="2005" name="Science">
        <title>The transcriptional landscape of the mammalian genome.</title>
        <authorList>
            <person name="Carninci P."/>
            <person name="Kasukawa T."/>
            <person name="Katayama S."/>
            <person name="Gough J."/>
            <person name="Frith M.C."/>
            <person name="Maeda N."/>
            <person name="Oyama R."/>
            <person name="Ravasi T."/>
            <person name="Lenhard B."/>
            <person name="Wells C."/>
            <person name="Kodzius R."/>
            <person name="Shimokawa K."/>
            <person name="Bajic V.B."/>
            <person name="Brenner S.E."/>
            <person name="Batalov S."/>
            <person name="Forrest A.R."/>
            <person name="Zavolan M."/>
            <person name="Davis M.J."/>
            <person name="Wilming L.G."/>
            <person name="Aidinis V."/>
            <person name="Allen J.E."/>
            <person name="Ambesi-Impiombato A."/>
            <person name="Apweiler R."/>
            <person name="Aturaliya R.N."/>
            <person name="Bailey T.L."/>
            <person name="Bansal M."/>
            <person name="Baxter L."/>
            <person name="Beisel K.W."/>
            <person name="Bersano T."/>
            <person name="Bono H."/>
            <person name="Chalk A.M."/>
            <person name="Chiu K.P."/>
            <person name="Choudhary V."/>
            <person name="Christoffels A."/>
            <person name="Clutterbuck D.R."/>
            <person name="Crowe M.L."/>
            <person name="Dalla E."/>
            <person name="Dalrymple B.P."/>
            <person name="de Bono B."/>
            <person name="Della Gatta G."/>
            <person name="di Bernardo D."/>
            <person name="Down T."/>
            <person name="Engstrom P."/>
            <person name="Fagiolini M."/>
            <person name="Faulkner G."/>
            <person name="Fletcher C.F."/>
            <person name="Fukushima T."/>
            <person name="Furuno M."/>
            <person name="Futaki S."/>
            <person name="Gariboldi M."/>
            <person name="Georgii-Hemming P."/>
            <person name="Gingeras T.R."/>
            <person name="Gojobori T."/>
            <person name="Green R.E."/>
            <person name="Gustincich S."/>
            <person name="Harbers M."/>
            <person name="Hayashi Y."/>
            <person name="Hensch T.K."/>
            <person name="Hirokawa N."/>
            <person name="Hill D."/>
            <person name="Huminiecki L."/>
            <person name="Iacono M."/>
            <person name="Ikeo K."/>
            <person name="Iwama A."/>
            <person name="Ishikawa T."/>
            <person name="Jakt M."/>
            <person name="Kanapin A."/>
            <person name="Katoh M."/>
            <person name="Kawasawa Y."/>
            <person name="Kelso J."/>
            <person name="Kitamura H."/>
            <person name="Kitano H."/>
            <person name="Kollias G."/>
            <person name="Krishnan S.P."/>
            <person name="Kruger A."/>
            <person name="Kummerfeld S.K."/>
            <person name="Kurochkin I.V."/>
            <person name="Lareau L.F."/>
            <person name="Lazarevic D."/>
            <person name="Lipovich L."/>
            <person name="Liu J."/>
            <person name="Liuni S."/>
            <person name="McWilliam S."/>
            <person name="Madan Babu M."/>
            <person name="Madera M."/>
            <person name="Marchionni L."/>
            <person name="Matsuda H."/>
            <person name="Matsuzawa S."/>
            <person name="Miki H."/>
            <person name="Mignone F."/>
            <person name="Miyake S."/>
            <person name="Morris K."/>
            <person name="Mottagui-Tabar S."/>
            <person name="Mulder N."/>
            <person name="Nakano N."/>
            <person name="Nakauchi H."/>
            <person name="Ng P."/>
            <person name="Nilsson R."/>
            <person name="Nishiguchi S."/>
            <person name="Nishikawa S."/>
            <person name="Nori F."/>
            <person name="Ohara O."/>
            <person name="Okazaki Y."/>
            <person name="Orlando V."/>
            <person name="Pang K.C."/>
            <person name="Pavan W.J."/>
            <person name="Pavesi G."/>
            <person name="Pesole G."/>
            <person name="Petrovsky N."/>
            <person name="Piazza S."/>
            <person name="Reed J."/>
            <person name="Reid J.F."/>
            <person name="Ring B.Z."/>
            <person name="Ringwald M."/>
            <person name="Rost B."/>
            <person name="Ruan Y."/>
            <person name="Salzberg S.L."/>
            <person name="Sandelin A."/>
            <person name="Schneider C."/>
            <person name="Schoenbach C."/>
            <person name="Sekiguchi K."/>
            <person name="Semple C.A."/>
            <person name="Seno S."/>
            <person name="Sessa L."/>
            <person name="Sheng Y."/>
            <person name="Shibata Y."/>
            <person name="Shimada H."/>
            <person name="Shimada K."/>
            <person name="Silva D."/>
            <person name="Sinclair B."/>
            <person name="Sperling S."/>
            <person name="Stupka E."/>
            <person name="Sugiura K."/>
            <person name="Sultana R."/>
            <person name="Takenaka Y."/>
            <person name="Taki K."/>
            <person name="Tammoja K."/>
            <person name="Tan S.L."/>
            <person name="Tang S."/>
            <person name="Taylor M.S."/>
            <person name="Tegner J."/>
            <person name="Teichmann S.A."/>
            <person name="Ueda H.R."/>
            <person name="van Nimwegen E."/>
            <person name="Verardo R."/>
            <person name="Wei C.L."/>
            <person name="Yagi K."/>
            <person name="Yamanishi H."/>
            <person name="Zabarovsky E."/>
            <person name="Zhu S."/>
            <person name="Zimmer A."/>
            <person name="Hide W."/>
            <person name="Bult C."/>
            <person name="Grimmond S.M."/>
            <person name="Teasdale R.D."/>
            <person name="Liu E.T."/>
            <person name="Brusic V."/>
            <person name="Quackenbush J."/>
            <person name="Wahlestedt C."/>
            <person name="Mattick J.S."/>
            <person name="Hume D.A."/>
            <person name="Kai C."/>
            <person name="Sasaki D."/>
            <person name="Tomaru Y."/>
            <person name="Fukuda S."/>
            <person name="Kanamori-Katayama M."/>
            <person name="Suzuki M."/>
            <person name="Aoki J."/>
            <person name="Arakawa T."/>
            <person name="Iida J."/>
            <person name="Imamura K."/>
            <person name="Itoh M."/>
            <person name="Kato T."/>
            <person name="Kawaji H."/>
            <person name="Kawagashira N."/>
            <person name="Kawashima T."/>
            <person name="Kojima M."/>
            <person name="Kondo S."/>
            <person name="Konno H."/>
            <person name="Nakano K."/>
            <person name="Ninomiya N."/>
            <person name="Nishio T."/>
            <person name="Okada M."/>
            <person name="Plessy C."/>
            <person name="Shibata K."/>
            <person name="Shiraki T."/>
            <person name="Suzuki S."/>
            <person name="Tagami M."/>
            <person name="Waki K."/>
            <person name="Watahiki A."/>
            <person name="Okamura-Oho Y."/>
            <person name="Suzuki H."/>
            <person name="Kawai J."/>
            <person name="Hayashizaki Y."/>
        </authorList>
    </citation>
    <scope>NUCLEOTIDE SEQUENCE [LARGE SCALE MRNA] (ISOFORMS 1 AND 2)</scope>
    <source>
        <strain>C57BL/6J</strain>
        <tissue>Cerebellum</tissue>
        <tissue>Head</tissue>
        <tissue>Lung</tissue>
        <tissue>Thymus</tissue>
        <tissue>Vagina</tissue>
        <tissue>Wolffian duct</tissue>
    </source>
</reference>
<reference key="3">
    <citation type="journal article" date="2004" name="Genome Res.">
        <title>The status, quality, and expansion of the NIH full-length cDNA project: the Mammalian Gene Collection (MGC).</title>
        <authorList>
            <consortium name="The MGC Project Team"/>
        </authorList>
    </citation>
    <scope>NUCLEOTIDE SEQUENCE [LARGE SCALE MRNA] (ISOFORM 1)</scope>
    <source>
        <strain>FVB/N</strain>
        <tissue>Liver</tissue>
    </source>
</reference>
<reference key="4">
    <citation type="journal article" date="2003" name="DNA Res.">
        <title>Prediction of the coding sequences of mouse homologues of KIAA gene: II. The complete nucleotide sequences of 400 mouse KIAA-homologous cDNAs identified by screening of terminal sequences of cDNA clones randomly sampled from size-fractionated libraries.</title>
        <authorList>
            <person name="Okazaki N."/>
            <person name="Kikuno R."/>
            <person name="Ohara R."/>
            <person name="Inamoto S."/>
            <person name="Aizawa H."/>
            <person name="Yuasa S."/>
            <person name="Nakajima D."/>
            <person name="Nagase T."/>
            <person name="Ohara O."/>
            <person name="Koga H."/>
        </authorList>
    </citation>
    <scope>NUCLEOTIDE SEQUENCE [LARGE SCALE MRNA] OF 7-1087 (ISOFORM 1)</scope>
    <source>
        <tissue>Brain</tissue>
    </source>
</reference>
<reference key="5">
    <citation type="journal article" date="2010" name="Cell">
        <title>A tissue-specific atlas of mouse protein phosphorylation and expression.</title>
        <authorList>
            <person name="Huttlin E.L."/>
            <person name="Jedrychowski M.P."/>
            <person name="Elias J.E."/>
            <person name="Goswami T."/>
            <person name="Rad R."/>
            <person name="Beausoleil S.A."/>
            <person name="Villen J."/>
            <person name="Haas W."/>
            <person name="Sowa M.E."/>
            <person name="Gygi S.P."/>
        </authorList>
    </citation>
    <scope>IDENTIFICATION BY MASS SPECTROMETRY [LARGE SCALE ANALYSIS]</scope>
    <source>
        <tissue>Brain</tissue>
        <tissue>Brown adipose tissue</tissue>
        <tissue>Heart</tissue>
        <tissue>Kidney</tissue>
        <tissue>Liver</tissue>
        <tissue>Lung</tissue>
        <tissue>Pancreas</tissue>
        <tissue>Spleen</tissue>
        <tissue>Testis</tissue>
    </source>
</reference>
<gene>
    <name type="primary">Xpo7</name>
    <name type="synonym">Kiaa0745</name>
    <name type="synonym">Ranbp16</name>
</gene>
<sequence length="1087" mass="123810">MADHVQSLAQLENLCKQLYETTDTTTRLQAEKALVEFTNSPDCLSKCQLLLERGSSSYSQLLAATCLTKLVSRTNNPLPLEQRIDIRNYVLNYLATRPKLATFVTQALIQLYARITKLGWFDCQKDDYVFRNAITDVTRFLQDSVEYCIIGVTILSQLTNEINQADTTHPLTKHRKIASSFRDSSLFDIFTLSCNLLKQASGKNLNLNDESQHGLLMQLLKLTHNCLNFDFIGTSTDESSDDLCTVQIPTSWRSAFLDSSTLQLFFDLYHSIPPSFSPLVLSCLVQIASVRRSLFNNAERAKFLSHLVDGVKRILENPQSLSDPNNYHEFCRLLARLKSNYQLGELVKVENYPDVIRLIANFTVTSLQHWEFAPNSVHYLLSLWQRLAASVPYVKATEPHMLETYTPEVTKAYITSRLESVHIILRDGLEDPLEDTGLVQQQLDQLSTIGRCEYEKTCALLVQLFDQSAQSYQELLQSASASPMDIAVQEGRLTWLVYIIGAVIGGRVSFASTDEQDAMDGELVCRVLQLMNLTDSRLAQAGNEKLELAMLSFFEQFRKIYIGDQVQKSSKLYRRLSEVLGLNDETMVLSVFIGKVITNLKYWGRCEPITSKTLQLLNDLSIGYSSVRKLVKLSAVQFMLNNHTSEHFSFLGINNQSNLTDMRCRTTFYTALGRLLMVDLGEDEDQYEQFMLPLTAAFEAVAQMFSTNSFNEQEAKRTLVGLVRDLRGIAFAFNAKTSFMMLFEWIYPSYMPILQRAIELWYHDPACTTPVLKLMAELVHNRSQRLQFDVSSPNGILLFRETSKMITMYGNRILTLGEVPKDQVYALKLKGISICFSMLKAALSGSYVNFGVFRLYGDDALENALQTFIKLLLSIPHSDLLDYPKLSQSYYSLLEVLTQDHMNFIASLEPHVIMYILSSISEGLTALDTMVCTGCCSCLDHIVTYLFKQLSRSTKKRTTPLNRESDCFLHIMQQHPAMIQQMLSTVLNIIIFEDCRNQWSMSRPLLGLILLNEKYFSDLRNSIVNSQPPEKQQAMHLCFENLMEGIERNLLTKNRDRFTQNLSAFRREVNDSMKNSTYGVNSNDMMS</sequence>
<keyword id="KW-0007">Acetylation</keyword>
<keyword id="KW-0025">Alternative splicing</keyword>
<keyword id="KW-0963">Cytoplasm</keyword>
<keyword id="KW-0539">Nucleus</keyword>
<keyword id="KW-0597">Phosphoprotein</keyword>
<keyword id="KW-0653">Protein transport</keyword>
<keyword id="KW-1185">Reference proteome</keyword>
<keyword id="KW-0813">Transport</keyword>
<accession>Q9EPK7</accession>
<accession>Q3TP94</accession>
<accession>Q80TS9</accession>
<accession>Q8BSK5</accession>
<accession>Q8C9M7</accession>
<accession>Q8CB42</accession>
<accession>Q8CBL8</accession>
<accession>Q8CEF5</accession>
<name>XPO7_MOUSE</name>
<dbReference type="EMBL" id="AJ297360">
    <property type="protein sequence ID" value="CAC17621.1"/>
    <property type="molecule type" value="mRNA"/>
</dbReference>
<dbReference type="EMBL" id="AK028303">
    <property type="protein sequence ID" value="BAC25870.1"/>
    <property type="molecule type" value="mRNA"/>
</dbReference>
<dbReference type="EMBL" id="AK032768">
    <property type="protein sequence ID" value="BAC28013.1"/>
    <property type="molecule type" value="mRNA"/>
</dbReference>
<dbReference type="EMBL" id="AK035775">
    <property type="protein sequence ID" value="BAC29182.1"/>
    <property type="molecule type" value="mRNA"/>
</dbReference>
<dbReference type="EMBL" id="AK036837">
    <property type="protein sequence ID" value="BAC29600.1"/>
    <property type="molecule type" value="mRNA"/>
</dbReference>
<dbReference type="EMBL" id="AK041768">
    <property type="protein sequence ID" value="BAC31059.1"/>
    <property type="molecule type" value="mRNA"/>
</dbReference>
<dbReference type="EMBL" id="AK164595">
    <property type="protein sequence ID" value="BAE37843.1"/>
    <property type="molecule type" value="mRNA"/>
</dbReference>
<dbReference type="EMBL" id="BC029702">
    <property type="protein sequence ID" value="AAH29702.1"/>
    <property type="molecule type" value="mRNA"/>
</dbReference>
<dbReference type="EMBL" id="AK122361">
    <property type="protein sequence ID" value="BAC65643.1"/>
    <property type="molecule type" value="Transcribed_RNA"/>
</dbReference>
<dbReference type="CCDS" id="CCDS36974.1">
    <molecule id="Q9EPK7-1"/>
</dbReference>
<dbReference type="RefSeq" id="NP_075532.1">
    <molecule id="Q9EPK7-1"/>
    <property type="nucleotide sequence ID" value="NM_023045.3"/>
</dbReference>
<dbReference type="SMR" id="Q9EPK7"/>
<dbReference type="BioGRID" id="211141">
    <property type="interactions" value="16"/>
</dbReference>
<dbReference type="FunCoup" id="Q9EPK7">
    <property type="interactions" value="5999"/>
</dbReference>
<dbReference type="IntAct" id="Q9EPK7">
    <property type="interactions" value="317"/>
</dbReference>
<dbReference type="MINT" id="Q9EPK7"/>
<dbReference type="STRING" id="10090.ENSMUSP00000022696"/>
<dbReference type="GlyGen" id="Q9EPK7">
    <property type="glycosylation" value="2 sites, 1 N-linked glycan (1 site), 1 O-linked glycan (1 site)"/>
</dbReference>
<dbReference type="iPTMnet" id="Q9EPK7"/>
<dbReference type="PhosphoSitePlus" id="Q9EPK7"/>
<dbReference type="SwissPalm" id="Q9EPK7"/>
<dbReference type="jPOST" id="Q9EPK7"/>
<dbReference type="PaxDb" id="10090-ENSMUSP00000129504"/>
<dbReference type="PeptideAtlas" id="Q9EPK7"/>
<dbReference type="ProteomicsDB" id="300008">
    <molecule id="Q9EPK7-1"/>
</dbReference>
<dbReference type="ProteomicsDB" id="300009">
    <molecule id="Q9EPK7-2"/>
</dbReference>
<dbReference type="Pumba" id="Q9EPK7"/>
<dbReference type="Antibodypedia" id="22439">
    <property type="antibodies" value="127 antibodies from 32 providers"/>
</dbReference>
<dbReference type="DNASU" id="65246"/>
<dbReference type="Ensembl" id="ENSMUST00000022696.8">
    <molecule id="Q9EPK7-1"/>
    <property type="protein sequence ID" value="ENSMUSP00000022696.7"/>
    <property type="gene ID" value="ENSMUSG00000022100.15"/>
</dbReference>
<dbReference type="Ensembl" id="ENSMUST00000226448.2">
    <molecule id="Q9EPK7-2"/>
    <property type="protein sequence ID" value="ENSMUSP00000153855.2"/>
    <property type="gene ID" value="ENSMUSG00000022100.15"/>
</dbReference>
<dbReference type="GeneID" id="65246"/>
<dbReference type="KEGG" id="mmu:65246"/>
<dbReference type="UCSC" id="uc033gsa.1">
    <molecule id="Q9EPK7-1"/>
    <property type="organism name" value="mouse"/>
</dbReference>
<dbReference type="AGR" id="MGI:1929705"/>
<dbReference type="CTD" id="23039"/>
<dbReference type="MGI" id="MGI:1929705">
    <property type="gene designation" value="Xpo7"/>
</dbReference>
<dbReference type="VEuPathDB" id="HostDB:ENSMUSG00000022100"/>
<dbReference type="eggNOG" id="KOG1410">
    <property type="taxonomic scope" value="Eukaryota"/>
</dbReference>
<dbReference type="GeneTree" id="ENSGT00940000153139"/>
<dbReference type="HOGENOM" id="CLU_005409_0_0_1"/>
<dbReference type="InParanoid" id="Q9EPK7"/>
<dbReference type="OMA" id="DCFHELC"/>
<dbReference type="PhylomeDB" id="Q9EPK7"/>
<dbReference type="BioGRID-ORCS" id="65246">
    <property type="hits" value="7 hits in 77 CRISPR screens"/>
</dbReference>
<dbReference type="ChiTaRS" id="Xpo7">
    <property type="organism name" value="mouse"/>
</dbReference>
<dbReference type="PRO" id="PR:Q9EPK7"/>
<dbReference type="Proteomes" id="UP000000589">
    <property type="component" value="Chromosome 14"/>
</dbReference>
<dbReference type="RNAct" id="Q9EPK7">
    <property type="molecule type" value="protein"/>
</dbReference>
<dbReference type="Bgee" id="ENSMUSG00000022100">
    <property type="expression patterns" value="Expressed in paneth cell and 266 other cell types or tissues"/>
</dbReference>
<dbReference type="ExpressionAtlas" id="Q9EPK7">
    <property type="expression patterns" value="baseline and differential"/>
</dbReference>
<dbReference type="GO" id="GO:0005737">
    <property type="term" value="C:cytoplasm"/>
    <property type="evidence" value="ECO:0007669"/>
    <property type="project" value="UniProtKB-SubCell"/>
</dbReference>
<dbReference type="GO" id="GO:0005634">
    <property type="term" value="C:nucleus"/>
    <property type="evidence" value="ECO:0007669"/>
    <property type="project" value="UniProtKB-SubCell"/>
</dbReference>
<dbReference type="GO" id="GO:0005049">
    <property type="term" value="F:nuclear export signal receptor activity"/>
    <property type="evidence" value="ECO:0007669"/>
    <property type="project" value="InterPro"/>
</dbReference>
<dbReference type="GO" id="GO:0031267">
    <property type="term" value="F:small GTPase binding"/>
    <property type="evidence" value="ECO:0000304"/>
    <property type="project" value="MGI"/>
</dbReference>
<dbReference type="GO" id="GO:0006886">
    <property type="term" value="P:intracellular protein transport"/>
    <property type="evidence" value="ECO:0007669"/>
    <property type="project" value="InterPro"/>
</dbReference>
<dbReference type="GO" id="GO:0006913">
    <property type="term" value="P:nucleocytoplasmic transport"/>
    <property type="evidence" value="ECO:0000304"/>
    <property type="project" value="MGI"/>
</dbReference>
<dbReference type="FunFam" id="1.25.10.10:FF:000042">
    <property type="entry name" value="exportin-7 isoform X1"/>
    <property type="match status" value="1"/>
</dbReference>
<dbReference type="FunFam" id="1.25.10.10:FF:000059">
    <property type="entry name" value="exportin-7 isoform X2"/>
    <property type="match status" value="1"/>
</dbReference>
<dbReference type="Gene3D" id="1.25.10.10">
    <property type="entry name" value="Leucine-rich Repeat Variant"/>
    <property type="match status" value="2"/>
</dbReference>
<dbReference type="InterPro" id="IPR011989">
    <property type="entry name" value="ARM-like"/>
</dbReference>
<dbReference type="InterPro" id="IPR016024">
    <property type="entry name" value="ARM-type_fold"/>
</dbReference>
<dbReference type="InterPro" id="IPR001494">
    <property type="entry name" value="Importin-beta_N"/>
</dbReference>
<dbReference type="InterPro" id="IPR044189">
    <property type="entry name" value="XPO4/7-like"/>
</dbReference>
<dbReference type="PANTHER" id="PTHR12596">
    <property type="entry name" value="EXPORTIN 4,7-RELATED"/>
    <property type="match status" value="1"/>
</dbReference>
<dbReference type="PANTHER" id="PTHR12596:SF11">
    <property type="entry name" value="EXPORTIN-7"/>
    <property type="match status" value="1"/>
</dbReference>
<dbReference type="Pfam" id="PF03810">
    <property type="entry name" value="IBN_N"/>
    <property type="match status" value="1"/>
</dbReference>
<dbReference type="SMART" id="SM00913">
    <property type="entry name" value="IBN_N"/>
    <property type="match status" value="1"/>
</dbReference>
<dbReference type="SUPFAM" id="SSF48371">
    <property type="entry name" value="ARM repeat"/>
    <property type="match status" value="1"/>
</dbReference>
<dbReference type="PROSITE" id="PS50166">
    <property type="entry name" value="IMPORTIN_B_NT"/>
    <property type="match status" value="1"/>
</dbReference>
<evidence type="ECO:0000250" key="1"/>
<evidence type="ECO:0000250" key="2">
    <source>
        <dbReference type="UniProtKB" id="Q9UIA9"/>
    </source>
</evidence>
<evidence type="ECO:0000255" key="3">
    <source>
        <dbReference type="PROSITE-ProRule" id="PRU00115"/>
    </source>
</evidence>
<evidence type="ECO:0000269" key="4">
    <source>
    </source>
</evidence>
<evidence type="ECO:0000303" key="5">
    <source>
    </source>
</evidence>
<evidence type="ECO:0000305" key="6"/>
<proteinExistence type="evidence at protein level"/>
<feature type="initiator methionine" description="Removed" evidence="2">
    <location>
        <position position="1"/>
    </location>
</feature>
<feature type="chain" id="PRO_0000204714" description="Exportin-7">
    <location>
        <begin position="2"/>
        <end position="1087"/>
    </location>
</feature>
<feature type="domain" description="Importin N-terminal" evidence="3">
    <location>
        <begin position="30"/>
        <end position="96"/>
    </location>
</feature>
<feature type="modified residue" description="N-acetylalanine" evidence="2">
    <location>
        <position position="2"/>
    </location>
</feature>
<feature type="modified residue" description="Phosphoserine" evidence="2">
    <location>
        <position position="570"/>
    </location>
</feature>
<feature type="splice variant" id="VSP_018600" description="In isoform 2." evidence="5">
    <location>
        <begin position="1058"/>
        <end position="1087"/>
    </location>
</feature>
<feature type="sequence conflict" description="In Ref. 2; BAC29600." evidence="6" ref="2">
    <original>P</original>
    <variation>T</variation>
    <location>
        <position position="77"/>
    </location>
</feature>
<feature type="sequence conflict" description="In Ref. 2; BAC29182." evidence="6" ref="2">
    <original>E</original>
    <variation>G</variation>
    <location>
        <position position="161"/>
    </location>
</feature>
<feature type="sequence conflict" description="In Ref. 4; BAC65643." evidence="6" ref="4">
    <original>S</original>
    <variation>N</variation>
    <location>
        <position position="251"/>
    </location>
</feature>
<feature type="sequence conflict" description="In Ref. 4; BAC65643." evidence="6" ref="4">
    <location>
        <begin position="681"/>
        <end position="683"/>
    </location>
</feature>
<protein>
    <recommendedName>
        <fullName>Exportin-7</fullName>
        <shortName>Exp7</shortName>
    </recommendedName>
    <alternativeName>
        <fullName>Ran-binding protein 16</fullName>
    </alternativeName>
</protein>
<organism>
    <name type="scientific">Mus musculus</name>
    <name type="common">Mouse</name>
    <dbReference type="NCBI Taxonomy" id="10090"/>
    <lineage>
        <taxon>Eukaryota</taxon>
        <taxon>Metazoa</taxon>
        <taxon>Chordata</taxon>
        <taxon>Craniata</taxon>
        <taxon>Vertebrata</taxon>
        <taxon>Euteleostomi</taxon>
        <taxon>Mammalia</taxon>
        <taxon>Eutheria</taxon>
        <taxon>Euarchontoglires</taxon>
        <taxon>Glires</taxon>
        <taxon>Rodentia</taxon>
        <taxon>Myomorpha</taxon>
        <taxon>Muroidea</taxon>
        <taxon>Muridae</taxon>
        <taxon>Murinae</taxon>
        <taxon>Mus</taxon>
        <taxon>Mus</taxon>
    </lineage>
</organism>